<evidence type="ECO:0000255" key="1">
    <source>
        <dbReference type="HAMAP-Rule" id="MF_00377"/>
    </source>
</evidence>
<evidence type="ECO:0000256" key="2">
    <source>
        <dbReference type="SAM" id="MobiDB-lite"/>
    </source>
</evidence>
<dbReference type="EMBL" id="CP001052">
    <property type="protein sequence ID" value="ACD14454.1"/>
    <property type="molecule type" value="Genomic_DNA"/>
</dbReference>
<dbReference type="RefSeq" id="WP_012431114.1">
    <property type="nucleotide sequence ID" value="NC_010681.1"/>
</dbReference>
<dbReference type="SMR" id="B2SZ75"/>
<dbReference type="STRING" id="398527.Bphyt_0001"/>
<dbReference type="KEGG" id="bpy:Bphyt_0001"/>
<dbReference type="eggNOG" id="COG0593">
    <property type="taxonomic scope" value="Bacteria"/>
</dbReference>
<dbReference type="HOGENOM" id="CLU_026910_0_1_4"/>
<dbReference type="Proteomes" id="UP000001739">
    <property type="component" value="Chromosome 1"/>
</dbReference>
<dbReference type="GO" id="GO:0005737">
    <property type="term" value="C:cytoplasm"/>
    <property type="evidence" value="ECO:0007669"/>
    <property type="project" value="UniProtKB-SubCell"/>
</dbReference>
<dbReference type="GO" id="GO:0005886">
    <property type="term" value="C:plasma membrane"/>
    <property type="evidence" value="ECO:0007669"/>
    <property type="project" value="TreeGrafter"/>
</dbReference>
<dbReference type="GO" id="GO:0005524">
    <property type="term" value="F:ATP binding"/>
    <property type="evidence" value="ECO:0007669"/>
    <property type="project" value="UniProtKB-UniRule"/>
</dbReference>
<dbReference type="GO" id="GO:0016887">
    <property type="term" value="F:ATP hydrolysis activity"/>
    <property type="evidence" value="ECO:0007669"/>
    <property type="project" value="InterPro"/>
</dbReference>
<dbReference type="GO" id="GO:0003688">
    <property type="term" value="F:DNA replication origin binding"/>
    <property type="evidence" value="ECO:0007669"/>
    <property type="project" value="UniProtKB-UniRule"/>
</dbReference>
<dbReference type="GO" id="GO:0008289">
    <property type="term" value="F:lipid binding"/>
    <property type="evidence" value="ECO:0007669"/>
    <property type="project" value="UniProtKB-KW"/>
</dbReference>
<dbReference type="GO" id="GO:0006270">
    <property type="term" value="P:DNA replication initiation"/>
    <property type="evidence" value="ECO:0007669"/>
    <property type="project" value="UniProtKB-UniRule"/>
</dbReference>
<dbReference type="GO" id="GO:0006275">
    <property type="term" value="P:regulation of DNA replication"/>
    <property type="evidence" value="ECO:0007669"/>
    <property type="project" value="UniProtKB-UniRule"/>
</dbReference>
<dbReference type="CDD" id="cd00009">
    <property type="entry name" value="AAA"/>
    <property type="match status" value="1"/>
</dbReference>
<dbReference type="CDD" id="cd06571">
    <property type="entry name" value="Bac_DnaA_C"/>
    <property type="match status" value="1"/>
</dbReference>
<dbReference type="FunFam" id="1.10.8.60:FF:000003">
    <property type="entry name" value="Chromosomal replication initiator protein DnaA"/>
    <property type="match status" value="1"/>
</dbReference>
<dbReference type="FunFam" id="3.40.50.300:FF:000668">
    <property type="entry name" value="Chromosomal replication initiator protein DnaA"/>
    <property type="match status" value="1"/>
</dbReference>
<dbReference type="Gene3D" id="1.10.1750.10">
    <property type="match status" value="1"/>
</dbReference>
<dbReference type="Gene3D" id="1.10.8.60">
    <property type="match status" value="1"/>
</dbReference>
<dbReference type="Gene3D" id="3.30.300.180">
    <property type="match status" value="1"/>
</dbReference>
<dbReference type="Gene3D" id="3.40.50.300">
    <property type="entry name" value="P-loop containing nucleotide triphosphate hydrolases"/>
    <property type="match status" value="1"/>
</dbReference>
<dbReference type="HAMAP" id="MF_00377">
    <property type="entry name" value="DnaA_bact"/>
    <property type="match status" value="1"/>
</dbReference>
<dbReference type="InterPro" id="IPR003593">
    <property type="entry name" value="AAA+_ATPase"/>
</dbReference>
<dbReference type="InterPro" id="IPR001957">
    <property type="entry name" value="Chromosome_initiator_DnaA"/>
</dbReference>
<dbReference type="InterPro" id="IPR020591">
    <property type="entry name" value="Chromosome_initiator_DnaA-like"/>
</dbReference>
<dbReference type="InterPro" id="IPR018312">
    <property type="entry name" value="Chromosome_initiator_DnaA_CS"/>
</dbReference>
<dbReference type="InterPro" id="IPR013159">
    <property type="entry name" value="DnaA_C"/>
</dbReference>
<dbReference type="InterPro" id="IPR013317">
    <property type="entry name" value="DnaA_dom"/>
</dbReference>
<dbReference type="InterPro" id="IPR024633">
    <property type="entry name" value="DnaA_N_dom"/>
</dbReference>
<dbReference type="InterPro" id="IPR038454">
    <property type="entry name" value="DnaA_N_sf"/>
</dbReference>
<dbReference type="InterPro" id="IPR027417">
    <property type="entry name" value="P-loop_NTPase"/>
</dbReference>
<dbReference type="InterPro" id="IPR010921">
    <property type="entry name" value="Trp_repressor/repl_initiator"/>
</dbReference>
<dbReference type="NCBIfam" id="TIGR00362">
    <property type="entry name" value="DnaA"/>
    <property type="match status" value="1"/>
</dbReference>
<dbReference type="PANTHER" id="PTHR30050">
    <property type="entry name" value="CHROMOSOMAL REPLICATION INITIATOR PROTEIN DNAA"/>
    <property type="match status" value="1"/>
</dbReference>
<dbReference type="PANTHER" id="PTHR30050:SF2">
    <property type="entry name" value="CHROMOSOMAL REPLICATION INITIATOR PROTEIN DNAA"/>
    <property type="match status" value="1"/>
</dbReference>
<dbReference type="Pfam" id="PF00308">
    <property type="entry name" value="Bac_DnaA"/>
    <property type="match status" value="1"/>
</dbReference>
<dbReference type="Pfam" id="PF08299">
    <property type="entry name" value="Bac_DnaA_C"/>
    <property type="match status" value="1"/>
</dbReference>
<dbReference type="Pfam" id="PF11638">
    <property type="entry name" value="DnaA_N"/>
    <property type="match status" value="1"/>
</dbReference>
<dbReference type="PRINTS" id="PR00051">
    <property type="entry name" value="DNAA"/>
</dbReference>
<dbReference type="SMART" id="SM00382">
    <property type="entry name" value="AAA"/>
    <property type="match status" value="1"/>
</dbReference>
<dbReference type="SMART" id="SM00760">
    <property type="entry name" value="Bac_DnaA_C"/>
    <property type="match status" value="1"/>
</dbReference>
<dbReference type="SUPFAM" id="SSF52540">
    <property type="entry name" value="P-loop containing nucleoside triphosphate hydrolases"/>
    <property type="match status" value="1"/>
</dbReference>
<dbReference type="SUPFAM" id="SSF48295">
    <property type="entry name" value="TrpR-like"/>
    <property type="match status" value="1"/>
</dbReference>
<dbReference type="PROSITE" id="PS01008">
    <property type="entry name" value="DNAA"/>
    <property type="match status" value="1"/>
</dbReference>
<protein>
    <recommendedName>
        <fullName evidence="1">Chromosomal replication initiator protein DnaA</fullName>
    </recommendedName>
</protein>
<reference key="1">
    <citation type="journal article" date="2011" name="J. Bacteriol.">
        <title>Complete genome sequence of the plant growth-promoting endophyte Burkholderia phytofirmans strain PsJN.</title>
        <authorList>
            <person name="Weilharter A."/>
            <person name="Mitter B."/>
            <person name="Shin M.V."/>
            <person name="Chain P.S."/>
            <person name="Nowak J."/>
            <person name="Sessitsch A."/>
        </authorList>
    </citation>
    <scope>NUCLEOTIDE SEQUENCE [LARGE SCALE GENOMIC DNA]</scope>
    <source>
        <strain>DSM 17436 / LMG 22146 / PsJN</strain>
    </source>
</reference>
<accession>B2SZ75</accession>
<organism>
    <name type="scientific">Paraburkholderia phytofirmans (strain DSM 17436 / LMG 22146 / PsJN)</name>
    <name type="common">Burkholderia phytofirmans</name>
    <dbReference type="NCBI Taxonomy" id="398527"/>
    <lineage>
        <taxon>Bacteria</taxon>
        <taxon>Pseudomonadati</taxon>
        <taxon>Pseudomonadota</taxon>
        <taxon>Betaproteobacteria</taxon>
        <taxon>Burkholderiales</taxon>
        <taxon>Burkholderiaceae</taxon>
        <taxon>Paraburkholderia</taxon>
    </lineage>
</organism>
<name>DNAA_PARPJ</name>
<gene>
    <name evidence="1" type="primary">dnaA</name>
    <name type="ordered locus">Bphyt_0001</name>
</gene>
<keyword id="KW-0067">ATP-binding</keyword>
<keyword id="KW-0963">Cytoplasm</keyword>
<keyword id="KW-0235">DNA replication</keyword>
<keyword id="KW-0238">DNA-binding</keyword>
<keyword id="KW-0446">Lipid-binding</keyword>
<keyword id="KW-0547">Nucleotide-binding</keyword>
<feature type="chain" id="PRO_1000121960" description="Chromosomal replication initiator protein DnaA">
    <location>
        <begin position="1"/>
        <end position="545"/>
    </location>
</feature>
<feature type="region of interest" description="Domain I, interacts with DnaA modulators" evidence="1">
    <location>
        <begin position="1"/>
        <end position="72"/>
    </location>
</feature>
<feature type="region of interest" description="Domain II" evidence="1">
    <location>
        <begin position="72"/>
        <end position="208"/>
    </location>
</feature>
<feature type="region of interest" description="Disordered" evidence="2">
    <location>
        <begin position="90"/>
        <end position="112"/>
    </location>
</feature>
<feature type="region of interest" description="Disordered" evidence="2">
    <location>
        <begin position="181"/>
        <end position="204"/>
    </location>
</feature>
<feature type="region of interest" description="Domain III, AAA+ region" evidence="1">
    <location>
        <begin position="209"/>
        <end position="425"/>
    </location>
</feature>
<feature type="region of interest" description="Domain IV, binds dsDNA" evidence="1">
    <location>
        <begin position="426"/>
        <end position="545"/>
    </location>
</feature>
<feature type="compositionally biased region" description="Low complexity" evidence="2">
    <location>
        <begin position="90"/>
        <end position="105"/>
    </location>
</feature>
<feature type="compositionally biased region" description="Polar residues" evidence="2">
    <location>
        <begin position="189"/>
        <end position="201"/>
    </location>
</feature>
<feature type="binding site" evidence="1">
    <location>
        <position position="253"/>
    </location>
    <ligand>
        <name>ATP</name>
        <dbReference type="ChEBI" id="CHEBI:30616"/>
    </ligand>
</feature>
<feature type="binding site" evidence="1">
    <location>
        <position position="255"/>
    </location>
    <ligand>
        <name>ATP</name>
        <dbReference type="ChEBI" id="CHEBI:30616"/>
    </ligand>
</feature>
<feature type="binding site" evidence="1">
    <location>
        <position position="256"/>
    </location>
    <ligand>
        <name>ATP</name>
        <dbReference type="ChEBI" id="CHEBI:30616"/>
    </ligand>
</feature>
<feature type="binding site" evidence="1">
    <location>
        <position position="257"/>
    </location>
    <ligand>
        <name>ATP</name>
        <dbReference type="ChEBI" id="CHEBI:30616"/>
    </ligand>
</feature>
<sequence>MNDFWQHCSALLERELTPQQYVTWIKPLAPVAFDAAANTLSIAAPNRFKLDWVKSQFSGRIADMARDFWQAPVDVQFVLDPKAGMRAPAAAAPAPASARPASAPGSMGGSAGNGAAVDAAVGAVQAAQAARAAGTNGANNAMANLNANARAAAEQNANARAAAADDSADLDLPSLDANEAAAARRTWRPGQSASSNGNGETDSMYERSKLNPVLTFDNFVTGKANQLARAAAIQVADNPGISYNPLFLYGGVGLGKTHLIHAIGNQLLMDKAGARIRYIHAEQYVSDVVKAYQRKAFDDFKRYYHSLDLLLIDDIQFFSGKSRTQEEFFYAFEALVANKAQVIITSDTYPKEISGIDDRLISRFDSGLTVAIEPPELEMRVAILMRKAQSEFVSLNEDVAFFVAKHLRSNVRELEGALRKILAYSKFHGREITIEVTKEALKDLLTVQNRQISVENIQKTTADFYSIKVADMYSKKRPANIARPRQIAMYLAKELTQKSLPEIGELFGGRDHTTVLHAVRKIADERSKDAQLNHELHVLEQTLKG</sequence>
<proteinExistence type="inferred from homology"/>
<comment type="function">
    <text evidence="1">Plays an essential role in the initiation and regulation of chromosomal replication. ATP-DnaA binds to the origin of replication (oriC) to initiate formation of the DNA replication initiation complex once per cell cycle. Binds the DnaA box (a 9 base pair repeat at the origin) and separates the double-stranded (ds)DNA. Forms a right-handed helical filament on oriC DNA; dsDNA binds to the exterior of the filament while single-stranded (ss)DNA is stabiized in the filament's interior. The ATP-DnaA-oriC complex binds and stabilizes one strand of the AT-rich DNA unwinding element (DUE), permitting loading of DNA polymerase. After initiation quickly degrades to an ADP-DnaA complex that is not apt for DNA replication. Binds acidic phospholipids.</text>
</comment>
<comment type="subunit">
    <text evidence="1">Oligomerizes as a right-handed, spiral filament on DNA at oriC.</text>
</comment>
<comment type="subcellular location">
    <subcellularLocation>
        <location evidence="1">Cytoplasm</location>
    </subcellularLocation>
</comment>
<comment type="domain">
    <text evidence="1">Domain I is involved in oligomerization and binding regulators, domain II is flexibile and of varying length in different bacteria, domain III forms the AAA+ region, while domain IV binds dsDNA.</text>
</comment>
<comment type="similarity">
    <text evidence="1">Belongs to the DnaA family.</text>
</comment>